<name>ATPG_CHLPB</name>
<comment type="function">
    <text evidence="1">Produces ATP from ADP in the presence of a proton gradient across the membrane. The gamma chain is believed to be important in regulating ATPase activity and the flow of protons through the CF(0) complex.</text>
</comment>
<comment type="subunit">
    <text evidence="1">F-type ATPases have 2 components, CF(1) - the catalytic core - and CF(0) - the membrane proton channel. CF(1) has five subunits: alpha(3), beta(3), gamma(1), delta(1), epsilon(1). CF(0) has three main subunits: a, b and c.</text>
</comment>
<comment type="subcellular location">
    <subcellularLocation>
        <location evidence="1">Cell inner membrane</location>
        <topology evidence="1">Peripheral membrane protein</topology>
    </subcellularLocation>
</comment>
<comment type="similarity">
    <text evidence="1">Belongs to the ATPase gamma chain family.</text>
</comment>
<gene>
    <name evidence="1" type="primary">atpG</name>
    <name type="ordered locus">Cphamn1_0298</name>
</gene>
<organism>
    <name type="scientific">Chlorobium phaeobacteroides (strain BS1)</name>
    <dbReference type="NCBI Taxonomy" id="331678"/>
    <lineage>
        <taxon>Bacteria</taxon>
        <taxon>Pseudomonadati</taxon>
        <taxon>Chlorobiota</taxon>
        <taxon>Chlorobiia</taxon>
        <taxon>Chlorobiales</taxon>
        <taxon>Chlorobiaceae</taxon>
        <taxon>Chlorobium/Pelodictyon group</taxon>
        <taxon>Chlorobium</taxon>
    </lineage>
</organism>
<sequence>MATLKDIRTRIQSIASTQQVTKAMKMVSAAKLRRAQDSAIQARPYAAKLKEMLGSLSTRVDTTLNPLLSDRDEVKNVLVVVITSDRGLCGAFNANIIKIAQKVVTEEHGDLYRDGKVEMLCAGSKGNDYFRKRGFSISKAYPGLFQNLHFSVAREIAEYASERYLKGEVDKVVVVYNEFKSVLAPVLKSEVLLPITPEKVEGEKTGSSIDYIYEPSPSAIIDVLVPKHLNTQIWRMMLESNAAEHASRMTAMDSATENAKELMRVLKISYNRARQAAITTELSEIVAGAEALQGE</sequence>
<reference key="1">
    <citation type="submission" date="2008-06" db="EMBL/GenBank/DDBJ databases">
        <title>Complete sequence of Chlorobium phaeobacteroides BS1.</title>
        <authorList>
            <consortium name="US DOE Joint Genome Institute"/>
            <person name="Lucas S."/>
            <person name="Copeland A."/>
            <person name="Lapidus A."/>
            <person name="Glavina del Rio T."/>
            <person name="Dalin E."/>
            <person name="Tice H."/>
            <person name="Bruce D."/>
            <person name="Goodwin L."/>
            <person name="Pitluck S."/>
            <person name="Schmutz J."/>
            <person name="Larimer F."/>
            <person name="Land M."/>
            <person name="Hauser L."/>
            <person name="Kyrpides N."/>
            <person name="Ovchinnikova G."/>
            <person name="Li T."/>
            <person name="Liu Z."/>
            <person name="Zhao F."/>
            <person name="Overmann J."/>
            <person name="Bryant D.A."/>
            <person name="Richardson P."/>
        </authorList>
    </citation>
    <scope>NUCLEOTIDE SEQUENCE [LARGE SCALE GENOMIC DNA]</scope>
    <source>
        <strain>BS1</strain>
    </source>
</reference>
<evidence type="ECO:0000255" key="1">
    <source>
        <dbReference type="HAMAP-Rule" id="MF_00815"/>
    </source>
</evidence>
<dbReference type="EMBL" id="CP001101">
    <property type="protein sequence ID" value="ACE03267.1"/>
    <property type="molecule type" value="Genomic_DNA"/>
</dbReference>
<dbReference type="SMR" id="B3EL40"/>
<dbReference type="STRING" id="331678.Cphamn1_0298"/>
<dbReference type="KEGG" id="cpb:Cphamn1_0298"/>
<dbReference type="eggNOG" id="COG0224">
    <property type="taxonomic scope" value="Bacteria"/>
</dbReference>
<dbReference type="HOGENOM" id="CLU_050669_0_1_10"/>
<dbReference type="OrthoDB" id="9812769at2"/>
<dbReference type="GO" id="GO:0005886">
    <property type="term" value="C:plasma membrane"/>
    <property type="evidence" value="ECO:0007669"/>
    <property type="project" value="UniProtKB-SubCell"/>
</dbReference>
<dbReference type="GO" id="GO:0045259">
    <property type="term" value="C:proton-transporting ATP synthase complex"/>
    <property type="evidence" value="ECO:0007669"/>
    <property type="project" value="UniProtKB-KW"/>
</dbReference>
<dbReference type="GO" id="GO:0005524">
    <property type="term" value="F:ATP binding"/>
    <property type="evidence" value="ECO:0007669"/>
    <property type="project" value="UniProtKB-UniRule"/>
</dbReference>
<dbReference type="GO" id="GO:0046933">
    <property type="term" value="F:proton-transporting ATP synthase activity, rotational mechanism"/>
    <property type="evidence" value="ECO:0007669"/>
    <property type="project" value="UniProtKB-UniRule"/>
</dbReference>
<dbReference type="GO" id="GO:0042777">
    <property type="term" value="P:proton motive force-driven plasma membrane ATP synthesis"/>
    <property type="evidence" value="ECO:0007669"/>
    <property type="project" value="UniProtKB-UniRule"/>
</dbReference>
<dbReference type="CDD" id="cd12151">
    <property type="entry name" value="F1-ATPase_gamma"/>
    <property type="match status" value="1"/>
</dbReference>
<dbReference type="Gene3D" id="3.40.1380.10">
    <property type="match status" value="1"/>
</dbReference>
<dbReference type="Gene3D" id="1.10.287.80">
    <property type="entry name" value="ATP synthase, gamma subunit, helix hairpin domain"/>
    <property type="match status" value="2"/>
</dbReference>
<dbReference type="HAMAP" id="MF_00815">
    <property type="entry name" value="ATP_synth_gamma_bact"/>
    <property type="match status" value="1"/>
</dbReference>
<dbReference type="InterPro" id="IPR035968">
    <property type="entry name" value="ATP_synth_F1_ATPase_gsu"/>
</dbReference>
<dbReference type="InterPro" id="IPR000131">
    <property type="entry name" value="ATP_synth_F1_gsu"/>
</dbReference>
<dbReference type="InterPro" id="IPR023632">
    <property type="entry name" value="ATP_synth_F1_gsu_CS"/>
</dbReference>
<dbReference type="NCBIfam" id="TIGR01146">
    <property type="entry name" value="ATPsyn_F1gamma"/>
    <property type="match status" value="1"/>
</dbReference>
<dbReference type="NCBIfam" id="NF009958">
    <property type="entry name" value="PRK13425.1"/>
    <property type="match status" value="1"/>
</dbReference>
<dbReference type="PANTHER" id="PTHR11693">
    <property type="entry name" value="ATP SYNTHASE GAMMA CHAIN"/>
    <property type="match status" value="1"/>
</dbReference>
<dbReference type="PANTHER" id="PTHR11693:SF22">
    <property type="entry name" value="ATP SYNTHASE SUBUNIT GAMMA, MITOCHONDRIAL"/>
    <property type="match status" value="1"/>
</dbReference>
<dbReference type="Pfam" id="PF00231">
    <property type="entry name" value="ATP-synt"/>
    <property type="match status" value="1"/>
</dbReference>
<dbReference type="PRINTS" id="PR00126">
    <property type="entry name" value="ATPASEGAMMA"/>
</dbReference>
<dbReference type="SUPFAM" id="SSF52943">
    <property type="entry name" value="ATP synthase (F1-ATPase), gamma subunit"/>
    <property type="match status" value="1"/>
</dbReference>
<dbReference type="PROSITE" id="PS00153">
    <property type="entry name" value="ATPASE_GAMMA"/>
    <property type="match status" value="1"/>
</dbReference>
<accession>B3EL40</accession>
<keyword id="KW-0066">ATP synthesis</keyword>
<keyword id="KW-0997">Cell inner membrane</keyword>
<keyword id="KW-1003">Cell membrane</keyword>
<keyword id="KW-0139">CF(1)</keyword>
<keyword id="KW-0375">Hydrogen ion transport</keyword>
<keyword id="KW-0406">Ion transport</keyword>
<keyword id="KW-0472">Membrane</keyword>
<keyword id="KW-0813">Transport</keyword>
<protein>
    <recommendedName>
        <fullName evidence="1">ATP synthase gamma chain</fullName>
    </recommendedName>
    <alternativeName>
        <fullName evidence="1">ATP synthase F1 sector gamma subunit</fullName>
    </alternativeName>
    <alternativeName>
        <fullName evidence="1">F-ATPase gamma subunit</fullName>
    </alternativeName>
</protein>
<proteinExistence type="inferred from homology"/>
<feature type="chain" id="PRO_1000134124" description="ATP synthase gamma chain">
    <location>
        <begin position="1"/>
        <end position="295"/>
    </location>
</feature>